<reference key="1">
    <citation type="journal article" date="1989" name="Virology">
        <title>Nucleotide sequence and expression of the small (S) RNA segment of Maguari bunyavirus.</title>
        <authorList>
            <person name="Elliott R.M."/>
            <person name="McGregor A."/>
        </authorList>
    </citation>
    <scope>NUCLEOTIDE SEQUENCE [GENOMIC RNA]</scope>
</reference>
<feature type="chain" id="PRO_0000221993" description="Nucleoprotein">
    <location>
        <begin position="1"/>
        <end position="233"/>
    </location>
</feature>
<feature type="binding site" evidence="2">
    <location>
        <position position="14"/>
    </location>
    <ligand>
        <name>RNA</name>
        <dbReference type="ChEBI" id="CHEBI:33697"/>
    </ligand>
</feature>
<feature type="binding site" evidence="2">
    <location>
        <position position="15"/>
    </location>
    <ligand>
        <name>RNA</name>
        <dbReference type="ChEBI" id="CHEBI:33697"/>
    </ligand>
</feature>
<feature type="binding site" evidence="2">
    <location>
        <position position="18"/>
    </location>
    <ligand>
        <name>RNA</name>
        <dbReference type="ChEBI" id="CHEBI:33697"/>
    </ligand>
</feature>
<feature type="binding site" evidence="2">
    <location>
        <position position="47"/>
    </location>
    <ligand>
        <name>RNA</name>
        <dbReference type="ChEBI" id="CHEBI:33697"/>
    </ligand>
</feature>
<feature type="binding site" evidence="2">
    <location>
        <position position="50"/>
    </location>
    <ligand>
        <name>RNA</name>
        <dbReference type="ChEBI" id="CHEBI:33697"/>
    </ligand>
</feature>
<feature type="binding site" evidence="2">
    <location>
        <position position="75"/>
    </location>
    <ligand>
        <name>RNA</name>
        <dbReference type="ChEBI" id="CHEBI:33697"/>
    </ligand>
</feature>
<feature type="binding site" evidence="1">
    <location>
        <position position="81"/>
    </location>
    <ligand>
        <name>RNA</name>
        <dbReference type="ChEBI" id="CHEBI:33697"/>
    </ligand>
</feature>
<feature type="binding site" evidence="2">
    <location>
        <position position="94"/>
    </location>
    <ligand>
        <name>RNA</name>
        <dbReference type="ChEBI" id="CHEBI:33697"/>
    </ligand>
</feature>
<feature type="binding site" evidence="1">
    <location>
        <position position="123"/>
    </location>
    <ligand>
        <name>RNA</name>
        <dbReference type="ChEBI" id="CHEBI:33697"/>
    </ligand>
</feature>
<feature type="binding site" evidence="1">
    <location>
        <position position="125"/>
    </location>
    <ligand>
        <name>RNA</name>
        <dbReference type="ChEBI" id="CHEBI:33697"/>
    </ligand>
</feature>
<feature type="binding site" evidence="1">
    <location>
        <position position="128"/>
    </location>
    <ligand>
        <name>RNA</name>
        <dbReference type="ChEBI" id="CHEBI:33697"/>
    </ligand>
</feature>
<feature type="binding site" evidence="1">
    <location>
        <position position="166"/>
    </location>
    <ligand>
        <name>RNA</name>
        <dbReference type="ChEBI" id="CHEBI:33697"/>
    </ligand>
</feature>
<feature type="binding site" evidence="2">
    <location>
        <position position="176"/>
    </location>
    <ligand>
        <name>RNA</name>
        <dbReference type="ChEBI" id="CHEBI:33697"/>
    </ligand>
</feature>
<feature type="binding site" evidence="2">
    <location>
        <position position="182"/>
    </location>
    <ligand>
        <name>RNA</name>
        <dbReference type="ChEBI" id="CHEBI:33697"/>
    </ligand>
</feature>
<feature type="binding site" evidence="2">
    <location>
        <position position="183"/>
    </location>
    <ligand>
        <name>RNA</name>
        <dbReference type="ChEBI" id="CHEBI:33697"/>
    </ligand>
</feature>
<feature type="binding site" evidence="2">
    <location>
        <position position="184"/>
    </location>
    <ligand>
        <name>RNA</name>
        <dbReference type="ChEBI" id="CHEBI:33697"/>
    </ligand>
</feature>
<feature type="binding site" evidence="2">
    <location>
        <position position="217"/>
    </location>
    <ligand>
        <name>RNA</name>
        <dbReference type="ChEBI" id="CHEBI:33697"/>
    </ligand>
</feature>
<organism>
    <name type="scientific">Maguari virus</name>
    <dbReference type="NCBI Taxonomy" id="11575"/>
    <lineage>
        <taxon>Viruses</taxon>
        <taxon>Riboviria</taxon>
        <taxon>Orthornavirae</taxon>
        <taxon>Negarnaviricota</taxon>
        <taxon>Polyploviricotina</taxon>
        <taxon>Ellioviricetes</taxon>
        <taxon>Bunyavirales</taxon>
        <taxon>Peribunyaviridae</taxon>
        <taxon>Orthobunyavirus</taxon>
        <taxon>Orthobunyavirus maguariense</taxon>
    </lineage>
</organism>
<sequence>MIELEFNDVAANTSSTFDPEIAYVNFKRIHTTGLSYDHIRVLYIKGREIKTSLTKRSEWEVTLNLGGWKVAVFNTNFPGNRNSPVPDDGLTLHRLSGFLARYLLEKILKVSDPEKLIIKSKIINPLAEKNGITWADGEEVYLSFFPGSEMFLGTFKFYPLAIGIYKVQKKEMEPKYLEKTMRQRYMGLEAATWTVSKVNEVQAALTVVSGLGWKKTNVSAAAREFLAKFGINM</sequence>
<comment type="function">
    <text evidence="2">Encapsidates the genome protecting it from nucleases. The encapsidated genomic RNA is termed the nucleocapsid (NC) and serves as template for transcription and replication. The NC have a helical organization.</text>
</comment>
<comment type="subunit">
    <text evidence="2">Homotetramer. Binds the viral genomic RNA.</text>
</comment>
<comment type="subcellular location">
    <subcellularLocation>
        <location evidence="2">Virion</location>
    </subcellularLocation>
    <text evidence="2">Located inside the virion, complexed with the viral RNA.</text>
</comment>
<comment type="alternative products">
    <event type="alternative initiation"/>
    <isoform>
        <id>P16606-1</id>
        <name>N</name>
        <sequence type="displayed"/>
    </isoform>
    <isoform>
        <id>P16605-1</id>
        <name>NSS</name>
        <sequence type="external"/>
    </isoform>
</comment>
<comment type="domain">
    <text evidence="2">The N-terminus and C-terminus are involved in homooligomerization and play an essential role in viral RNA synthesis.</text>
</comment>
<comment type="similarity">
    <text evidence="3">Belongs to the orthobunyavirus nucleocapsid protein family.</text>
</comment>
<accession>P16606</accession>
<keyword id="KW-0024">Alternative initiation</keyword>
<keyword id="KW-0167">Capsid protein</keyword>
<keyword id="KW-1139">Helical capsid protein</keyword>
<keyword id="KW-0687">Ribonucleoprotein</keyword>
<keyword id="KW-0694">RNA-binding</keyword>
<keyword id="KW-0543">Viral nucleoprotein</keyword>
<keyword id="KW-0946">Virion</keyword>
<name>NCAP_MAGV</name>
<gene>
    <name type="primary">N</name>
</gene>
<dbReference type="EMBL" id="M28380">
    <property type="protein sequence ID" value="AAA57147.1"/>
    <property type="molecule type" value="Genomic_RNA"/>
</dbReference>
<dbReference type="EMBL" id="D13783">
    <property type="protein sequence ID" value="BAA02926.1"/>
    <property type="molecule type" value="Genomic_RNA"/>
</dbReference>
<dbReference type="PIR" id="A33076">
    <property type="entry name" value="VHVUMB"/>
</dbReference>
<dbReference type="SMR" id="P16606"/>
<dbReference type="GO" id="GO:0019029">
    <property type="term" value="C:helical viral capsid"/>
    <property type="evidence" value="ECO:0007669"/>
    <property type="project" value="UniProtKB-KW"/>
</dbReference>
<dbReference type="GO" id="GO:1990904">
    <property type="term" value="C:ribonucleoprotein complex"/>
    <property type="evidence" value="ECO:0007669"/>
    <property type="project" value="UniProtKB-KW"/>
</dbReference>
<dbReference type="GO" id="GO:0019013">
    <property type="term" value="C:viral nucleocapsid"/>
    <property type="evidence" value="ECO:0007669"/>
    <property type="project" value="UniProtKB-KW"/>
</dbReference>
<dbReference type="GO" id="GO:0003723">
    <property type="term" value="F:RNA binding"/>
    <property type="evidence" value="ECO:0007669"/>
    <property type="project" value="UniProtKB-KW"/>
</dbReference>
<dbReference type="Gene3D" id="1.20.142.20">
    <property type="match status" value="1"/>
</dbReference>
<dbReference type="Gene3D" id="1.10.472.180">
    <property type="entry name" value="Bunyavirus nucleocapsid (N) protein, C-terminal domain"/>
    <property type="match status" value="1"/>
</dbReference>
<dbReference type="InterPro" id="IPR001784">
    <property type="entry name" value="Bunya_nucleocap"/>
</dbReference>
<dbReference type="InterPro" id="IPR043011">
    <property type="entry name" value="Bunya_nucleocap_C"/>
</dbReference>
<dbReference type="InterPro" id="IPR043012">
    <property type="entry name" value="Bunya_nucleocap_N"/>
</dbReference>
<dbReference type="Pfam" id="PF00952">
    <property type="entry name" value="Bunya_nucleocap"/>
    <property type="match status" value="1"/>
</dbReference>
<dbReference type="PIRSF" id="PIRSF003947">
    <property type="entry name" value="N_OrthobunV"/>
    <property type="match status" value="1"/>
</dbReference>
<proteinExistence type="inferred from homology"/>
<organismHost>
    <name type="scientific">Equus caballus</name>
    <name type="common">Horse</name>
    <dbReference type="NCBI Taxonomy" id="9796"/>
</organismHost>
<evidence type="ECO:0000250" key="1">
    <source>
        <dbReference type="UniProtKB" id="P04873"/>
    </source>
</evidence>
<evidence type="ECO:0000250" key="2">
    <source>
        <dbReference type="UniProtKB" id="P16495"/>
    </source>
</evidence>
<evidence type="ECO:0000305" key="3"/>
<protein>
    <recommendedName>
        <fullName>Nucleoprotein</fullName>
    </recommendedName>
    <alternativeName>
        <fullName>Nucleocapsid protein</fullName>
        <shortName>Protein N</shortName>
    </alternativeName>
</protein>